<reference key="1">
    <citation type="book" date="2006" name="Gram positive pathogens, 2nd edition">
        <title>The Staphylococcus aureus NCTC 8325 genome.</title>
        <editorList>
            <person name="Fischetti V."/>
            <person name="Novick R."/>
            <person name="Ferretti J."/>
            <person name="Portnoy D."/>
            <person name="Rood J."/>
        </editorList>
        <authorList>
            <person name="Gillaspy A.F."/>
            <person name="Worrell V."/>
            <person name="Orvis J."/>
            <person name="Roe B.A."/>
            <person name="Dyer D.W."/>
            <person name="Iandolo J.J."/>
        </authorList>
    </citation>
    <scope>NUCLEOTIDE SEQUENCE [LARGE SCALE GENOMIC DNA]</scope>
    <source>
        <strain>NCTC 8325 / PS 47</strain>
    </source>
</reference>
<dbReference type="EMBL" id="CP000253">
    <property type="protein sequence ID" value="ABD30883.1"/>
    <property type="molecule type" value="Genomic_DNA"/>
</dbReference>
<dbReference type="RefSeq" id="WP_000777188.1">
    <property type="nucleotide sequence ID" value="NZ_LS483365.1"/>
</dbReference>
<dbReference type="RefSeq" id="YP_500320.1">
    <property type="nucleotide sequence ID" value="NC_007795.1"/>
</dbReference>
<dbReference type="PDB" id="7E3V">
    <property type="method" value="X-ray"/>
    <property type="resolution" value="2.05 A"/>
    <property type="chains" value="A/B/C/D/E/F=1-229"/>
</dbReference>
<dbReference type="PDB" id="7E3W">
    <property type="method" value="X-ray"/>
    <property type="resolution" value="1.55 A"/>
    <property type="chains" value="A/B/C/D/E/F=1-229"/>
</dbReference>
<dbReference type="PDBsum" id="7E3V"/>
<dbReference type="PDBsum" id="7E3W"/>
<dbReference type="SMR" id="Q2FXM0"/>
<dbReference type="STRING" id="93061.SAOUHSC_01815"/>
<dbReference type="PaxDb" id="1280-SAXN108_1735"/>
<dbReference type="GeneID" id="3919285"/>
<dbReference type="KEGG" id="sao:SAOUHSC_01815"/>
<dbReference type="PATRIC" id="fig|93061.5.peg.1655"/>
<dbReference type="eggNOG" id="COG2220">
    <property type="taxonomic scope" value="Bacteria"/>
</dbReference>
<dbReference type="HOGENOM" id="CLU_070010_4_1_9"/>
<dbReference type="OrthoDB" id="9789133at2"/>
<dbReference type="PRO" id="PR:Q2FXM0"/>
<dbReference type="Proteomes" id="UP000008816">
    <property type="component" value="Chromosome"/>
</dbReference>
<dbReference type="GO" id="GO:0016787">
    <property type="term" value="F:hydrolase activity"/>
    <property type="evidence" value="ECO:0000318"/>
    <property type="project" value="GO_Central"/>
</dbReference>
<dbReference type="CDD" id="cd06262">
    <property type="entry name" value="metallo-hydrolase-like_MBL-fold"/>
    <property type="match status" value="1"/>
</dbReference>
<dbReference type="Gene3D" id="3.60.15.10">
    <property type="entry name" value="Ribonuclease Z/Hydroxyacylglutathione hydrolase-like"/>
    <property type="match status" value="1"/>
</dbReference>
<dbReference type="HAMAP" id="MF_00457">
    <property type="entry name" value="UPF0173"/>
    <property type="match status" value="1"/>
</dbReference>
<dbReference type="InterPro" id="IPR001279">
    <property type="entry name" value="Metallo-B-lactamas"/>
</dbReference>
<dbReference type="InterPro" id="IPR036866">
    <property type="entry name" value="RibonucZ/Hydroxyglut_hydro"/>
</dbReference>
<dbReference type="InterPro" id="IPR022877">
    <property type="entry name" value="UPF0173"/>
</dbReference>
<dbReference type="InterPro" id="IPR050114">
    <property type="entry name" value="UPF0173_UPF0282_UlaG_hydrolase"/>
</dbReference>
<dbReference type="NCBIfam" id="NF001911">
    <property type="entry name" value="PRK00685.1"/>
    <property type="match status" value="1"/>
</dbReference>
<dbReference type="PANTHER" id="PTHR43546:SF3">
    <property type="entry name" value="UPF0173 METAL-DEPENDENT HYDROLASE MJ1163"/>
    <property type="match status" value="1"/>
</dbReference>
<dbReference type="PANTHER" id="PTHR43546">
    <property type="entry name" value="UPF0173 METAL-DEPENDENT HYDROLASE MJ1163-RELATED"/>
    <property type="match status" value="1"/>
</dbReference>
<dbReference type="Pfam" id="PF12706">
    <property type="entry name" value="Lactamase_B_2"/>
    <property type="match status" value="1"/>
</dbReference>
<dbReference type="SMART" id="SM00849">
    <property type="entry name" value="Lactamase_B"/>
    <property type="match status" value="1"/>
</dbReference>
<dbReference type="SUPFAM" id="SSF56281">
    <property type="entry name" value="Metallo-hydrolase/oxidoreductase"/>
    <property type="match status" value="1"/>
</dbReference>
<accession>Q2FXM0</accession>
<comment type="similarity">
    <text evidence="1">Belongs to the UPF0173 family.</text>
</comment>
<sequence>MKLSFHGQSTIYLEGNNKKVIVDPFISNNPKCDLNIETVQVDYIVLTHGHFDHFGDVVELAKKTGATVIGSAEMADYLSSYHGVENVHGMNIGGKANFDFGSVKFVQAFHSSSFTHENGIPVYLGMPMGIVFEVEGKTIYHTGDTGLFSDMSLIAKRHPVDVCFVPIGDNFTMGIDDASYAINEFIKPKISVPIHYDTFPLIEQDPQQFKDAVNVGDVQILKPGESVQF</sequence>
<protein>
    <recommendedName>
        <fullName evidence="1">UPF0173 metal-dependent hydrolase SAOUHSC_01815</fullName>
    </recommendedName>
</protein>
<name>Y1815_STAA8</name>
<gene>
    <name type="ordered locus">SAOUHSC_01815</name>
</gene>
<organism>
    <name type="scientific">Staphylococcus aureus (strain NCTC 8325 / PS 47)</name>
    <dbReference type="NCBI Taxonomy" id="93061"/>
    <lineage>
        <taxon>Bacteria</taxon>
        <taxon>Bacillati</taxon>
        <taxon>Bacillota</taxon>
        <taxon>Bacilli</taxon>
        <taxon>Bacillales</taxon>
        <taxon>Staphylococcaceae</taxon>
        <taxon>Staphylococcus</taxon>
    </lineage>
</organism>
<feature type="chain" id="PRO_1000013511" description="UPF0173 metal-dependent hydrolase SAOUHSC_01815">
    <location>
        <begin position="1"/>
        <end position="229"/>
    </location>
</feature>
<feature type="strand" evidence="2">
    <location>
        <begin position="3"/>
        <end position="5"/>
    </location>
</feature>
<feature type="strand" evidence="2">
    <location>
        <begin position="11"/>
        <end position="15"/>
    </location>
</feature>
<feature type="strand" evidence="2">
    <location>
        <begin position="18"/>
        <end position="23"/>
    </location>
</feature>
<feature type="turn" evidence="2">
    <location>
        <begin position="36"/>
        <end position="38"/>
    </location>
</feature>
<feature type="strand" evidence="2">
    <location>
        <begin position="42"/>
        <end position="45"/>
    </location>
</feature>
<feature type="helix" evidence="2">
    <location>
        <begin position="51"/>
        <end position="54"/>
    </location>
</feature>
<feature type="helix" evidence="2">
    <location>
        <begin position="57"/>
        <end position="64"/>
    </location>
</feature>
<feature type="strand" evidence="2">
    <location>
        <begin position="67"/>
        <end position="71"/>
    </location>
</feature>
<feature type="helix" evidence="2">
    <location>
        <begin position="72"/>
        <end position="80"/>
    </location>
</feature>
<feature type="strand" evidence="2">
    <location>
        <begin position="87"/>
        <end position="90"/>
    </location>
</feature>
<feature type="strand" evidence="2">
    <location>
        <begin position="95"/>
        <end position="98"/>
    </location>
</feature>
<feature type="strand" evidence="2">
    <location>
        <begin position="101"/>
        <end position="107"/>
    </location>
</feature>
<feature type="strand" evidence="2">
    <location>
        <begin position="113"/>
        <end position="115"/>
    </location>
</feature>
<feature type="strand" evidence="2">
    <location>
        <begin position="121"/>
        <end position="123"/>
    </location>
</feature>
<feature type="strand" evidence="2">
    <location>
        <begin position="128"/>
        <end position="134"/>
    </location>
</feature>
<feature type="strand" evidence="2">
    <location>
        <begin position="137"/>
        <end position="141"/>
    </location>
</feature>
<feature type="helix" evidence="2">
    <location>
        <begin position="151"/>
        <end position="157"/>
    </location>
</feature>
<feature type="strand" evidence="2">
    <location>
        <begin position="161"/>
        <end position="166"/>
    </location>
</feature>
<feature type="strand" evidence="2">
    <location>
        <begin position="170"/>
        <end position="172"/>
    </location>
</feature>
<feature type="helix" evidence="2">
    <location>
        <begin position="175"/>
        <end position="184"/>
    </location>
</feature>
<feature type="strand" evidence="2">
    <location>
        <begin position="189"/>
        <end position="195"/>
    </location>
</feature>
<feature type="strand" evidence="2">
    <location>
        <begin position="197"/>
        <end position="199"/>
    </location>
</feature>
<feature type="helix" evidence="2">
    <location>
        <begin position="200"/>
        <end position="202"/>
    </location>
</feature>
<feature type="helix" evidence="2">
    <location>
        <begin position="206"/>
        <end position="212"/>
    </location>
</feature>
<feature type="strand" evidence="2">
    <location>
        <begin position="215"/>
        <end position="218"/>
    </location>
</feature>
<keyword id="KW-0002">3D-structure</keyword>
<keyword id="KW-0378">Hydrolase</keyword>
<keyword id="KW-1185">Reference proteome</keyword>
<evidence type="ECO:0000255" key="1">
    <source>
        <dbReference type="HAMAP-Rule" id="MF_00457"/>
    </source>
</evidence>
<evidence type="ECO:0007829" key="2">
    <source>
        <dbReference type="PDB" id="7E3W"/>
    </source>
</evidence>
<proteinExistence type="evidence at protein level"/>